<evidence type="ECO:0000255" key="1">
    <source>
        <dbReference type="HAMAP-Rule" id="MF_00185"/>
    </source>
</evidence>
<reference key="1">
    <citation type="journal article" date="2008" name="PLoS ONE">
        <title>Environmental adaptation: genomic analysis of the piezotolerant and psychrotolerant deep-sea iron reducing bacterium Shewanella piezotolerans WP3.</title>
        <authorList>
            <person name="Wang F."/>
            <person name="Wang J."/>
            <person name="Jian H."/>
            <person name="Zhang B."/>
            <person name="Li S."/>
            <person name="Wang F."/>
            <person name="Zeng X."/>
            <person name="Gao L."/>
            <person name="Bartlett D.H."/>
            <person name="Yu J."/>
            <person name="Hu S."/>
            <person name="Xiao X."/>
        </authorList>
    </citation>
    <scope>NUCLEOTIDE SEQUENCE [LARGE SCALE GENOMIC DNA]</scope>
    <source>
        <strain>WP3 / JCM 13877</strain>
    </source>
</reference>
<sequence>MTEQRKHKVITLMGPTASGKTALAIELVKNYDCEIISVDSALIYQQMDVGSAKPDAAELAVAPHHLIDIIDPADSYSAADFRKDALLKIEDIISRGKTPLLVGGTMMYFKALIEGLSPLPGANDEIRAQIAVEAQANGWQALHDQLKEVDPVAAARIHPNDPQRLARALEVFRISGKSLTELTKVKSEAFPYEAIQFAIAPNDRKVLHKAIETRFKAMLGLGFVEEVKKLKSRDDLHLELPSMRCVGYRQCWQHLDGEYDYETMVEKAIVATRQLAKRQLTWLRGWPDLIWLESGAENNLDTVLRYSR</sequence>
<name>MIAA_SHEPW</name>
<dbReference type="EC" id="2.5.1.75" evidence="1"/>
<dbReference type="EMBL" id="CP000472">
    <property type="protein sequence ID" value="ACJ27600.1"/>
    <property type="molecule type" value="Genomic_DNA"/>
</dbReference>
<dbReference type="RefSeq" id="WP_020910979.1">
    <property type="nucleotide sequence ID" value="NC_011566.1"/>
</dbReference>
<dbReference type="SMR" id="B8CIX4"/>
<dbReference type="STRING" id="225849.swp_0787"/>
<dbReference type="KEGG" id="swp:swp_0787"/>
<dbReference type="eggNOG" id="COG0324">
    <property type="taxonomic scope" value="Bacteria"/>
</dbReference>
<dbReference type="HOGENOM" id="CLU_032616_0_0_6"/>
<dbReference type="OrthoDB" id="9776390at2"/>
<dbReference type="Proteomes" id="UP000000753">
    <property type="component" value="Chromosome"/>
</dbReference>
<dbReference type="GO" id="GO:0005524">
    <property type="term" value="F:ATP binding"/>
    <property type="evidence" value="ECO:0007669"/>
    <property type="project" value="UniProtKB-UniRule"/>
</dbReference>
<dbReference type="GO" id="GO:0052381">
    <property type="term" value="F:tRNA dimethylallyltransferase activity"/>
    <property type="evidence" value="ECO:0007669"/>
    <property type="project" value="UniProtKB-UniRule"/>
</dbReference>
<dbReference type="GO" id="GO:0006400">
    <property type="term" value="P:tRNA modification"/>
    <property type="evidence" value="ECO:0007669"/>
    <property type="project" value="TreeGrafter"/>
</dbReference>
<dbReference type="FunFam" id="1.10.20.140:FF:000001">
    <property type="entry name" value="tRNA dimethylallyltransferase"/>
    <property type="match status" value="1"/>
</dbReference>
<dbReference type="Gene3D" id="1.10.20.140">
    <property type="match status" value="1"/>
</dbReference>
<dbReference type="Gene3D" id="3.40.50.300">
    <property type="entry name" value="P-loop containing nucleotide triphosphate hydrolases"/>
    <property type="match status" value="1"/>
</dbReference>
<dbReference type="HAMAP" id="MF_00185">
    <property type="entry name" value="IPP_trans"/>
    <property type="match status" value="1"/>
</dbReference>
<dbReference type="InterPro" id="IPR039657">
    <property type="entry name" value="Dimethylallyltransferase"/>
</dbReference>
<dbReference type="InterPro" id="IPR018022">
    <property type="entry name" value="IPT"/>
</dbReference>
<dbReference type="InterPro" id="IPR027417">
    <property type="entry name" value="P-loop_NTPase"/>
</dbReference>
<dbReference type="NCBIfam" id="TIGR00174">
    <property type="entry name" value="miaA"/>
    <property type="match status" value="1"/>
</dbReference>
<dbReference type="PANTHER" id="PTHR11088">
    <property type="entry name" value="TRNA DIMETHYLALLYLTRANSFERASE"/>
    <property type="match status" value="1"/>
</dbReference>
<dbReference type="PANTHER" id="PTHR11088:SF60">
    <property type="entry name" value="TRNA DIMETHYLALLYLTRANSFERASE"/>
    <property type="match status" value="1"/>
</dbReference>
<dbReference type="Pfam" id="PF01715">
    <property type="entry name" value="IPPT"/>
    <property type="match status" value="1"/>
</dbReference>
<dbReference type="SUPFAM" id="SSF52540">
    <property type="entry name" value="P-loop containing nucleoside triphosphate hydrolases"/>
    <property type="match status" value="1"/>
</dbReference>
<keyword id="KW-0067">ATP-binding</keyword>
<keyword id="KW-0460">Magnesium</keyword>
<keyword id="KW-0547">Nucleotide-binding</keyword>
<keyword id="KW-0808">Transferase</keyword>
<keyword id="KW-0819">tRNA processing</keyword>
<feature type="chain" id="PRO_1000191865" description="tRNA dimethylallyltransferase">
    <location>
        <begin position="1"/>
        <end position="308"/>
    </location>
</feature>
<feature type="region of interest" description="Interaction with substrate tRNA" evidence="1">
    <location>
        <begin position="39"/>
        <end position="42"/>
    </location>
</feature>
<feature type="region of interest" description="Interaction with substrate tRNA" evidence="1">
    <location>
        <begin position="163"/>
        <end position="167"/>
    </location>
</feature>
<feature type="region of interest" description="Interaction with substrate tRNA" evidence="1">
    <location>
        <begin position="244"/>
        <end position="249"/>
    </location>
</feature>
<feature type="binding site" evidence="1">
    <location>
        <begin position="14"/>
        <end position="21"/>
    </location>
    <ligand>
        <name>ATP</name>
        <dbReference type="ChEBI" id="CHEBI:30616"/>
    </ligand>
</feature>
<feature type="binding site" evidence="1">
    <location>
        <begin position="16"/>
        <end position="21"/>
    </location>
    <ligand>
        <name>substrate</name>
    </ligand>
</feature>
<feature type="site" description="Interaction with substrate tRNA" evidence="1">
    <location>
        <position position="105"/>
    </location>
</feature>
<feature type="site" description="Interaction with substrate tRNA" evidence="1">
    <location>
        <position position="127"/>
    </location>
</feature>
<proteinExistence type="inferred from homology"/>
<accession>B8CIX4</accession>
<protein>
    <recommendedName>
        <fullName evidence="1">tRNA dimethylallyltransferase</fullName>
        <ecNumber evidence="1">2.5.1.75</ecNumber>
    </recommendedName>
    <alternativeName>
        <fullName evidence="1">Dimethylallyl diphosphate:tRNA dimethylallyltransferase</fullName>
        <shortName evidence="1">DMAPP:tRNA dimethylallyltransferase</shortName>
        <shortName evidence="1">DMATase</shortName>
    </alternativeName>
    <alternativeName>
        <fullName evidence="1">Isopentenyl-diphosphate:tRNA isopentenyltransferase</fullName>
        <shortName evidence="1">IPP transferase</shortName>
        <shortName evidence="1">IPPT</shortName>
        <shortName evidence="1">IPTase</shortName>
    </alternativeName>
</protein>
<comment type="function">
    <text evidence="1">Catalyzes the transfer of a dimethylallyl group onto the adenine at position 37 in tRNAs that read codons beginning with uridine, leading to the formation of N6-(dimethylallyl)adenosine (i(6)A).</text>
</comment>
<comment type="catalytic activity">
    <reaction evidence="1">
        <text>adenosine(37) in tRNA + dimethylallyl diphosphate = N(6)-dimethylallyladenosine(37) in tRNA + diphosphate</text>
        <dbReference type="Rhea" id="RHEA:26482"/>
        <dbReference type="Rhea" id="RHEA-COMP:10162"/>
        <dbReference type="Rhea" id="RHEA-COMP:10375"/>
        <dbReference type="ChEBI" id="CHEBI:33019"/>
        <dbReference type="ChEBI" id="CHEBI:57623"/>
        <dbReference type="ChEBI" id="CHEBI:74411"/>
        <dbReference type="ChEBI" id="CHEBI:74415"/>
        <dbReference type="EC" id="2.5.1.75"/>
    </reaction>
</comment>
<comment type="cofactor">
    <cofactor evidence="1">
        <name>Mg(2+)</name>
        <dbReference type="ChEBI" id="CHEBI:18420"/>
    </cofactor>
</comment>
<comment type="subunit">
    <text evidence="1">Monomer.</text>
</comment>
<comment type="similarity">
    <text evidence="1">Belongs to the IPP transferase family.</text>
</comment>
<organism>
    <name type="scientific">Shewanella piezotolerans (strain WP3 / JCM 13877)</name>
    <dbReference type="NCBI Taxonomy" id="225849"/>
    <lineage>
        <taxon>Bacteria</taxon>
        <taxon>Pseudomonadati</taxon>
        <taxon>Pseudomonadota</taxon>
        <taxon>Gammaproteobacteria</taxon>
        <taxon>Alteromonadales</taxon>
        <taxon>Shewanellaceae</taxon>
        <taxon>Shewanella</taxon>
    </lineage>
</organism>
<gene>
    <name evidence="1" type="primary">miaA</name>
    <name type="ordered locus">swp_0787</name>
</gene>